<reference key="1">
    <citation type="journal article" date="2005" name="BMC Genomics">
        <title>Bacterial genome adaptation to niches: divergence of the potential virulence genes in three Burkholderia species of different survival strategies.</title>
        <authorList>
            <person name="Kim H.S."/>
            <person name="Schell M.A."/>
            <person name="Yu Y."/>
            <person name="Ulrich R.L."/>
            <person name="Sarria S.H."/>
            <person name="Nierman W.C."/>
            <person name="DeShazer D."/>
        </authorList>
    </citation>
    <scope>NUCLEOTIDE SEQUENCE [LARGE SCALE GENOMIC DNA]</scope>
    <source>
        <strain>ATCC 700388 / DSM 13276 / CCUG 48851 / CIP 106301 / E264</strain>
    </source>
</reference>
<proteinExistence type="inferred from homology"/>
<dbReference type="EMBL" id="CP000086">
    <property type="protein sequence ID" value="ABC39178.1"/>
    <property type="molecule type" value="Genomic_DNA"/>
</dbReference>
<dbReference type="RefSeq" id="WP_004199276.1">
    <property type="nucleotide sequence ID" value="NZ_CP008786.1"/>
</dbReference>
<dbReference type="SMR" id="Q2SU28"/>
<dbReference type="GeneID" id="93061831"/>
<dbReference type="KEGG" id="bte:BTH_I3067"/>
<dbReference type="HOGENOM" id="CLU_041575_5_2_4"/>
<dbReference type="Proteomes" id="UP000001930">
    <property type="component" value="Chromosome I"/>
</dbReference>
<dbReference type="GO" id="GO:1990904">
    <property type="term" value="C:ribonucleoprotein complex"/>
    <property type="evidence" value="ECO:0007669"/>
    <property type="project" value="UniProtKB-KW"/>
</dbReference>
<dbReference type="GO" id="GO:0005840">
    <property type="term" value="C:ribosome"/>
    <property type="evidence" value="ECO:0007669"/>
    <property type="project" value="UniProtKB-KW"/>
</dbReference>
<dbReference type="GO" id="GO:0019843">
    <property type="term" value="F:rRNA binding"/>
    <property type="evidence" value="ECO:0007669"/>
    <property type="project" value="UniProtKB-UniRule"/>
</dbReference>
<dbReference type="GO" id="GO:0003735">
    <property type="term" value="F:structural constituent of ribosome"/>
    <property type="evidence" value="ECO:0007669"/>
    <property type="project" value="InterPro"/>
</dbReference>
<dbReference type="GO" id="GO:0006412">
    <property type="term" value="P:translation"/>
    <property type="evidence" value="ECO:0007669"/>
    <property type="project" value="UniProtKB-UniRule"/>
</dbReference>
<dbReference type="Gene3D" id="3.40.1370.10">
    <property type="match status" value="1"/>
</dbReference>
<dbReference type="HAMAP" id="MF_01328_B">
    <property type="entry name" value="Ribosomal_uL4_B"/>
    <property type="match status" value="1"/>
</dbReference>
<dbReference type="InterPro" id="IPR002136">
    <property type="entry name" value="Ribosomal_uL4"/>
</dbReference>
<dbReference type="InterPro" id="IPR013005">
    <property type="entry name" value="Ribosomal_uL4-like"/>
</dbReference>
<dbReference type="InterPro" id="IPR023574">
    <property type="entry name" value="Ribosomal_uL4_dom_sf"/>
</dbReference>
<dbReference type="NCBIfam" id="TIGR03953">
    <property type="entry name" value="rplD_bact"/>
    <property type="match status" value="1"/>
</dbReference>
<dbReference type="PANTHER" id="PTHR10746">
    <property type="entry name" value="50S RIBOSOMAL PROTEIN L4"/>
    <property type="match status" value="1"/>
</dbReference>
<dbReference type="PANTHER" id="PTHR10746:SF6">
    <property type="entry name" value="LARGE RIBOSOMAL SUBUNIT PROTEIN UL4M"/>
    <property type="match status" value="1"/>
</dbReference>
<dbReference type="Pfam" id="PF00573">
    <property type="entry name" value="Ribosomal_L4"/>
    <property type="match status" value="1"/>
</dbReference>
<dbReference type="SUPFAM" id="SSF52166">
    <property type="entry name" value="Ribosomal protein L4"/>
    <property type="match status" value="1"/>
</dbReference>
<keyword id="KW-0687">Ribonucleoprotein</keyword>
<keyword id="KW-0689">Ribosomal protein</keyword>
<keyword id="KW-0694">RNA-binding</keyword>
<keyword id="KW-0699">rRNA-binding</keyword>
<name>RL4_BURTA</name>
<gene>
    <name evidence="1" type="primary">rplD</name>
    <name type="ordered locus">BTH_I3067</name>
</gene>
<organism>
    <name type="scientific">Burkholderia thailandensis (strain ATCC 700388 / DSM 13276 / CCUG 48851 / CIP 106301 / E264)</name>
    <dbReference type="NCBI Taxonomy" id="271848"/>
    <lineage>
        <taxon>Bacteria</taxon>
        <taxon>Pseudomonadati</taxon>
        <taxon>Pseudomonadota</taxon>
        <taxon>Betaproteobacteria</taxon>
        <taxon>Burkholderiales</taxon>
        <taxon>Burkholderiaceae</taxon>
        <taxon>Burkholderia</taxon>
        <taxon>pseudomallei group</taxon>
    </lineage>
</organism>
<evidence type="ECO:0000255" key="1">
    <source>
        <dbReference type="HAMAP-Rule" id="MF_01328"/>
    </source>
</evidence>
<evidence type="ECO:0000256" key="2">
    <source>
        <dbReference type="SAM" id="MobiDB-lite"/>
    </source>
</evidence>
<evidence type="ECO:0000305" key="3"/>
<protein>
    <recommendedName>
        <fullName evidence="1">Large ribosomal subunit protein uL4</fullName>
    </recommendedName>
    <alternativeName>
        <fullName evidence="3">50S ribosomal protein L4</fullName>
    </alternativeName>
</protein>
<accession>Q2SU28</accession>
<feature type="chain" id="PRO_0000242355" description="Large ribosomal subunit protein uL4">
    <location>
        <begin position="1"/>
        <end position="206"/>
    </location>
</feature>
<feature type="region of interest" description="Disordered" evidence="2">
    <location>
        <begin position="45"/>
        <end position="85"/>
    </location>
</feature>
<feature type="compositionally biased region" description="Basic residues" evidence="2">
    <location>
        <begin position="58"/>
        <end position="70"/>
    </location>
</feature>
<sequence length="206" mass="22866">MELKLLNSNGQEGAVVNASDVVFGRDYNEALIHQVVVAYQANARQGNRAQKDREQVKHTTKKPWRQKGTGRARAGMSSSPLWRGGGRIFPNSPDENFSHKVNKKMHRAGLCSIFSQLAREGRLSVVEDIVLEAPKTKLLADKFKAMGLDSVLVITDTVDENLYLASRNLPHVAVVEPRYADPLSLIYFKKVLVTKAAVAQIEELLS</sequence>
<comment type="function">
    <text evidence="1">One of the primary rRNA binding proteins, this protein initially binds near the 5'-end of the 23S rRNA. It is important during the early stages of 50S assembly. It makes multiple contacts with different domains of the 23S rRNA in the assembled 50S subunit and ribosome.</text>
</comment>
<comment type="function">
    <text evidence="1">Forms part of the polypeptide exit tunnel.</text>
</comment>
<comment type="subunit">
    <text evidence="1">Part of the 50S ribosomal subunit.</text>
</comment>
<comment type="similarity">
    <text evidence="1">Belongs to the universal ribosomal protein uL4 family.</text>
</comment>